<keyword id="KW-0002">3D-structure</keyword>
<keyword id="KW-1185">Reference proteome</keyword>
<keyword id="KW-0687">Ribonucleoprotein</keyword>
<keyword id="KW-0689">Ribosomal protein</keyword>
<organism>
    <name type="scientific">Thermococcus kodakarensis (strain ATCC BAA-918 / JCM 12380 / KOD1)</name>
    <name type="common">Pyrococcus kodakaraensis (strain KOD1)</name>
    <dbReference type="NCBI Taxonomy" id="69014"/>
    <lineage>
        <taxon>Archaea</taxon>
        <taxon>Methanobacteriati</taxon>
        <taxon>Methanobacteriota</taxon>
        <taxon>Thermococci</taxon>
        <taxon>Thermococcales</taxon>
        <taxon>Thermococcaceae</taxon>
        <taxon>Thermococcus</taxon>
    </lineage>
</organism>
<sequence length="121" mass="13772">MVKRTGPTDINLRRLIRTLRKKSNEEGVKIWKDIAWRLERPRRQRAEVNISKINRYTKEGDVVIVPGSVLGAGRLEHKVVVAAWKFSEAARRKIIEAGGEAISIEELMERNPKGSGVIIME</sequence>
<reference key="1">
    <citation type="journal article" date="2005" name="Genome Res.">
        <title>Complete genome sequence of the hyperthermophilic archaeon Thermococcus kodakaraensis KOD1 and comparison with Pyrococcus genomes.</title>
        <authorList>
            <person name="Fukui T."/>
            <person name="Atomi H."/>
            <person name="Kanai T."/>
            <person name="Matsumi R."/>
            <person name="Fujiwara S."/>
            <person name="Imanaka T."/>
        </authorList>
    </citation>
    <scope>NUCLEOTIDE SEQUENCE [LARGE SCALE GENOMIC DNA]</scope>
    <source>
        <strain>ATCC BAA-918 / JCM 12380 / KOD1</strain>
    </source>
</reference>
<reference evidence="4 5 6" key="2">
    <citation type="journal article" date="2020" name="Nature">
        <title>Dynamic RNA acetylation revealed by quantitative cross-evolutionary mapping.</title>
        <authorList>
            <person name="Sas-Chen A."/>
            <person name="Thomas J.M."/>
            <person name="Matzov D."/>
            <person name="Taoka M."/>
            <person name="Nance K.D."/>
            <person name="Nir R."/>
            <person name="Bryson K.M."/>
            <person name="Shachar R."/>
            <person name="Liman G.L.S."/>
            <person name="Burkhart B.W."/>
            <person name="Gamage S.T."/>
            <person name="Nobe Y."/>
            <person name="Briney C.A."/>
            <person name="Levy M.J."/>
            <person name="Fuchs R.T."/>
            <person name="Robb G.B."/>
            <person name="Hartmann J."/>
            <person name="Sharma S."/>
            <person name="Lin Q."/>
            <person name="Florens L."/>
            <person name="Washburn M.P."/>
            <person name="Isobe T."/>
            <person name="Santangelo T.J."/>
            <person name="Shalev-Benami M."/>
            <person name="Meier J.L."/>
            <person name="Schwartz S."/>
        </authorList>
    </citation>
    <scope>STRUCTURE BY ELECTRON MICROSCOPY (2.55 ANGSTROMS) IN 70S RIBOSOME</scope>
    <scope>SUBUNIT</scope>
    <source>
        <strain>ATCC BAA-918 / TS559</strain>
    </source>
</reference>
<protein>
    <recommendedName>
        <fullName evidence="1">Large ribosomal subunit protein eL18</fullName>
    </recommendedName>
    <alternativeName>
        <fullName evidence="3">50S ribosomal protein L18e</fullName>
    </alternativeName>
</protein>
<feature type="chain" id="PRO_0000132801" description="Large ribosomal subunit protein eL18">
    <location>
        <begin position="1"/>
        <end position="121"/>
    </location>
</feature>
<accession>Q5JJF5</accession>
<gene>
    <name evidence="1" type="primary">rpl18e</name>
    <name type="ordered locus">TK1502</name>
</gene>
<comment type="subunit">
    <text evidence="2">Part of the 50S ribosomal subunit.</text>
</comment>
<comment type="similarity">
    <text evidence="1">Belongs to the eukaryotic ribosomal protein eL18 family.</text>
</comment>
<proteinExistence type="evidence at protein level"/>
<evidence type="ECO:0000255" key="1">
    <source>
        <dbReference type="HAMAP-Rule" id="MF_00329"/>
    </source>
</evidence>
<evidence type="ECO:0000269" key="2">
    <source>
    </source>
</evidence>
<evidence type="ECO:0000305" key="3"/>
<evidence type="ECO:0007744" key="4">
    <source>
        <dbReference type="PDB" id="6SKF"/>
    </source>
</evidence>
<evidence type="ECO:0007744" key="5">
    <source>
        <dbReference type="PDB" id="6SKG"/>
    </source>
</evidence>
<evidence type="ECO:0007744" key="6">
    <source>
        <dbReference type="PDB" id="6TH6"/>
    </source>
</evidence>
<dbReference type="EMBL" id="AP006878">
    <property type="protein sequence ID" value="BAD85691.1"/>
    <property type="molecule type" value="Genomic_DNA"/>
</dbReference>
<dbReference type="RefSeq" id="WP_011250453.1">
    <property type="nucleotide sequence ID" value="NC_006624.1"/>
</dbReference>
<dbReference type="PDB" id="6SKF">
    <property type="method" value="EM"/>
    <property type="resolution" value="2.95 A"/>
    <property type="chains" value="BR=1-121"/>
</dbReference>
<dbReference type="PDB" id="6SKG">
    <property type="method" value="EM"/>
    <property type="resolution" value="2.65 A"/>
    <property type="chains" value="BR=1-121"/>
</dbReference>
<dbReference type="PDB" id="6TH6">
    <property type="method" value="EM"/>
    <property type="resolution" value="2.55 A"/>
    <property type="chains" value="BR=1-121"/>
</dbReference>
<dbReference type="PDBsum" id="6SKF"/>
<dbReference type="PDBsum" id="6SKG"/>
<dbReference type="PDBsum" id="6TH6"/>
<dbReference type="EMDB" id="EMD-10223"/>
<dbReference type="EMDB" id="EMD-10224"/>
<dbReference type="EMDB" id="EMD-10503"/>
<dbReference type="SMR" id="Q5JJF5"/>
<dbReference type="FunCoup" id="Q5JJF5">
    <property type="interactions" value="136"/>
</dbReference>
<dbReference type="STRING" id="69014.TK1502"/>
<dbReference type="EnsemblBacteria" id="BAD85691">
    <property type="protein sequence ID" value="BAD85691"/>
    <property type="gene ID" value="TK1502"/>
</dbReference>
<dbReference type="GeneID" id="78448028"/>
<dbReference type="KEGG" id="tko:TK1502"/>
<dbReference type="PATRIC" id="fig|69014.16.peg.1462"/>
<dbReference type="eggNOG" id="arCOG00780">
    <property type="taxonomic scope" value="Archaea"/>
</dbReference>
<dbReference type="HOGENOM" id="CLU_146465_0_0_2"/>
<dbReference type="InParanoid" id="Q5JJF5"/>
<dbReference type="OrthoDB" id="11309at2157"/>
<dbReference type="PhylomeDB" id="Q5JJF5"/>
<dbReference type="Proteomes" id="UP000000536">
    <property type="component" value="Chromosome"/>
</dbReference>
<dbReference type="GO" id="GO:0022625">
    <property type="term" value="C:cytosolic large ribosomal subunit"/>
    <property type="evidence" value="ECO:0000318"/>
    <property type="project" value="GO_Central"/>
</dbReference>
<dbReference type="GO" id="GO:0003723">
    <property type="term" value="F:RNA binding"/>
    <property type="evidence" value="ECO:0000318"/>
    <property type="project" value="GO_Central"/>
</dbReference>
<dbReference type="GO" id="GO:0003735">
    <property type="term" value="F:structural constituent of ribosome"/>
    <property type="evidence" value="ECO:0000318"/>
    <property type="project" value="GO_Central"/>
</dbReference>
<dbReference type="GO" id="GO:0006412">
    <property type="term" value="P:translation"/>
    <property type="evidence" value="ECO:0007669"/>
    <property type="project" value="UniProtKB-UniRule"/>
</dbReference>
<dbReference type="FunFam" id="3.100.10.10:FF:000013">
    <property type="entry name" value="50S ribosomal protein L18e"/>
    <property type="match status" value="1"/>
</dbReference>
<dbReference type="Gene3D" id="3.100.10.10">
    <property type="match status" value="1"/>
</dbReference>
<dbReference type="HAMAP" id="MF_00329">
    <property type="entry name" value="Ribosomal_eL18"/>
    <property type="match status" value="1"/>
</dbReference>
<dbReference type="InterPro" id="IPR000039">
    <property type="entry name" value="Ribosomal_eL18"/>
</dbReference>
<dbReference type="InterPro" id="IPR021132">
    <property type="entry name" value="Ribosomal_eL18/eL18-A/B/_CS"/>
</dbReference>
<dbReference type="InterPro" id="IPR022947">
    <property type="entry name" value="Ribosomal_eL18_arc"/>
</dbReference>
<dbReference type="InterPro" id="IPR021131">
    <property type="entry name" value="Ribosomal_uL15/eL18"/>
</dbReference>
<dbReference type="InterPro" id="IPR036227">
    <property type="entry name" value="Ribosomal_uL15/eL18_sf"/>
</dbReference>
<dbReference type="NCBIfam" id="NF003079">
    <property type="entry name" value="PRK04005.1"/>
    <property type="match status" value="1"/>
</dbReference>
<dbReference type="PANTHER" id="PTHR10934">
    <property type="entry name" value="60S RIBOSOMAL PROTEIN L18"/>
    <property type="match status" value="1"/>
</dbReference>
<dbReference type="PANTHER" id="PTHR10934:SF2">
    <property type="entry name" value="LARGE RIBOSOMAL SUBUNIT PROTEIN EL18"/>
    <property type="match status" value="1"/>
</dbReference>
<dbReference type="Pfam" id="PF17135">
    <property type="entry name" value="Ribosomal_L18"/>
    <property type="match status" value="1"/>
</dbReference>
<dbReference type="SUPFAM" id="SSF52080">
    <property type="entry name" value="Ribosomal proteins L15p and L18e"/>
    <property type="match status" value="1"/>
</dbReference>
<dbReference type="PROSITE" id="PS01106">
    <property type="entry name" value="RIBOSOMAL_L18E"/>
    <property type="match status" value="1"/>
</dbReference>
<name>RL18E_THEKO</name>